<protein>
    <recommendedName>
        <fullName evidence="1">Beta-ketoacyl-[acyl-carrier-protein] synthase III</fullName>
        <shortName evidence="1">Beta-ketoacyl-ACP synthase III</shortName>
        <shortName evidence="1">KAS III</shortName>
        <ecNumber evidence="1">2.3.1.180</ecNumber>
    </recommendedName>
    <alternativeName>
        <fullName evidence="1">3-oxoacyl-[acyl-carrier-protein] synthase 3</fullName>
    </alternativeName>
    <alternativeName>
        <fullName evidence="1">3-oxoacyl-[acyl-carrier-protein] synthase III</fullName>
    </alternativeName>
</protein>
<feature type="chain" id="PRO_1000070229" description="Beta-ketoacyl-[acyl-carrier-protein] synthase III">
    <location>
        <begin position="1"/>
        <end position="317"/>
    </location>
</feature>
<feature type="region of interest" description="ACP-binding" evidence="1">
    <location>
        <begin position="245"/>
        <end position="249"/>
    </location>
</feature>
<feature type="active site" evidence="1">
    <location>
        <position position="112"/>
    </location>
</feature>
<feature type="active site" evidence="1">
    <location>
        <position position="244"/>
    </location>
</feature>
<feature type="active site" evidence="1">
    <location>
        <position position="274"/>
    </location>
</feature>
<reference key="1">
    <citation type="journal article" date="2008" name="J. Bacteriol.">
        <title>The pangenome structure of Escherichia coli: comparative genomic analysis of E. coli commensal and pathogenic isolates.</title>
        <authorList>
            <person name="Rasko D.A."/>
            <person name="Rosovitz M.J."/>
            <person name="Myers G.S.A."/>
            <person name="Mongodin E.F."/>
            <person name="Fricke W.F."/>
            <person name="Gajer P."/>
            <person name="Crabtree J."/>
            <person name="Sebaihia M."/>
            <person name="Thomson N.R."/>
            <person name="Chaudhuri R."/>
            <person name="Henderson I.R."/>
            <person name="Sperandio V."/>
            <person name="Ravel J."/>
        </authorList>
    </citation>
    <scope>NUCLEOTIDE SEQUENCE [LARGE SCALE GENOMIC DNA]</scope>
    <source>
        <strain>HS</strain>
    </source>
</reference>
<evidence type="ECO:0000255" key="1">
    <source>
        <dbReference type="HAMAP-Rule" id="MF_01815"/>
    </source>
</evidence>
<dbReference type="EC" id="2.3.1.180" evidence="1"/>
<dbReference type="EMBL" id="CP000802">
    <property type="protein sequence ID" value="ABV05552.1"/>
    <property type="molecule type" value="Genomic_DNA"/>
</dbReference>
<dbReference type="RefSeq" id="WP_000288146.1">
    <property type="nucleotide sequence ID" value="NC_009800.1"/>
</dbReference>
<dbReference type="SMR" id="A7ZZ48"/>
<dbReference type="KEGG" id="ecx:EcHS_A1213"/>
<dbReference type="HOGENOM" id="CLU_039592_4_1_6"/>
<dbReference type="UniPathway" id="UPA00094"/>
<dbReference type="GO" id="GO:0005737">
    <property type="term" value="C:cytoplasm"/>
    <property type="evidence" value="ECO:0007669"/>
    <property type="project" value="UniProtKB-SubCell"/>
</dbReference>
<dbReference type="GO" id="GO:0004315">
    <property type="term" value="F:3-oxoacyl-[acyl-carrier-protein] synthase activity"/>
    <property type="evidence" value="ECO:0007669"/>
    <property type="project" value="InterPro"/>
</dbReference>
<dbReference type="GO" id="GO:0033818">
    <property type="term" value="F:beta-ketoacyl-acyl-carrier-protein synthase III activity"/>
    <property type="evidence" value="ECO:0007669"/>
    <property type="project" value="UniProtKB-UniRule"/>
</dbReference>
<dbReference type="GO" id="GO:0006633">
    <property type="term" value="P:fatty acid biosynthetic process"/>
    <property type="evidence" value="ECO:0007669"/>
    <property type="project" value="UniProtKB-UniRule"/>
</dbReference>
<dbReference type="CDD" id="cd00830">
    <property type="entry name" value="KAS_III"/>
    <property type="match status" value="1"/>
</dbReference>
<dbReference type="FunFam" id="3.40.47.10:FF:000004">
    <property type="entry name" value="3-oxoacyl-[acyl-carrier-protein] synthase 3"/>
    <property type="match status" value="1"/>
</dbReference>
<dbReference type="Gene3D" id="3.40.47.10">
    <property type="match status" value="1"/>
</dbReference>
<dbReference type="HAMAP" id="MF_01815">
    <property type="entry name" value="FabH"/>
    <property type="match status" value="1"/>
</dbReference>
<dbReference type="InterPro" id="IPR013747">
    <property type="entry name" value="ACP_syn_III_C"/>
</dbReference>
<dbReference type="InterPro" id="IPR013751">
    <property type="entry name" value="ACP_syn_III_N"/>
</dbReference>
<dbReference type="InterPro" id="IPR004655">
    <property type="entry name" value="FabH"/>
</dbReference>
<dbReference type="InterPro" id="IPR016039">
    <property type="entry name" value="Thiolase-like"/>
</dbReference>
<dbReference type="NCBIfam" id="TIGR00747">
    <property type="entry name" value="fabH"/>
    <property type="match status" value="1"/>
</dbReference>
<dbReference type="NCBIfam" id="NF006829">
    <property type="entry name" value="PRK09352.1"/>
    <property type="match status" value="1"/>
</dbReference>
<dbReference type="PANTHER" id="PTHR43091">
    <property type="entry name" value="3-OXOACYL-[ACYL-CARRIER-PROTEIN] SYNTHASE"/>
    <property type="match status" value="1"/>
</dbReference>
<dbReference type="PANTHER" id="PTHR43091:SF1">
    <property type="entry name" value="BETA-KETOACYL-[ACYL-CARRIER-PROTEIN] SYNTHASE III, CHLOROPLASTIC"/>
    <property type="match status" value="1"/>
</dbReference>
<dbReference type="Pfam" id="PF08545">
    <property type="entry name" value="ACP_syn_III"/>
    <property type="match status" value="1"/>
</dbReference>
<dbReference type="Pfam" id="PF08541">
    <property type="entry name" value="ACP_syn_III_C"/>
    <property type="match status" value="1"/>
</dbReference>
<dbReference type="SUPFAM" id="SSF53901">
    <property type="entry name" value="Thiolase-like"/>
    <property type="match status" value="1"/>
</dbReference>
<comment type="function">
    <text evidence="1">Catalyzes the condensation reaction of fatty acid synthesis by the addition to an acyl acceptor of two carbons from malonyl-ACP. Catalyzes the first condensation reaction which initiates fatty acid synthesis and may therefore play a role in governing the total rate of fatty acid production. Possesses both acetoacetyl-ACP synthase and acetyl transacylase activities. Its substrate specificity determines the biosynthesis of branched-chain and/or straight-chain of fatty acids.</text>
</comment>
<comment type="catalytic activity">
    <reaction evidence="1">
        <text>malonyl-[ACP] + acetyl-CoA + H(+) = 3-oxobutanoyl-[ACP] + CO2 + CoA</text>
        <dbReference type="Rhea" id="RHEA:12080"/>
        <dbReference type="Rhea" id="RHEA-COMP:9623"/>
        <dbReference type="Rhea" id="RHEA-COMP:9625"/>
        <dbReference type="ChEBI" id="CHEBI:15378"/>
        <dbReference type="ChEBI" id="CHEBI:16526"/>
        <dbReference type="ChEBI" id="CHEBI:57287"/>
        <dbReference type="ChEBI" id="CHEBI:57288"/>
        <dbReference type="ChEBI" id="CHEBI:78449"/>
        <dbReference type="ChEBI" id="CHEBI:78450"/>
        <dbReference type="EC" id="2.3.1.180"/>
    </reaction>
</comment>
<comment type="pathway">
    <text evidence="1">Lipid metabolism; fatty acid biosynthesis.</text>
</comment>
<comment type="subunit">
    <text evidence="1">Homodimer.</text>
</comment>
<comment type="subcellular location">
    <subcellularLocation>
        <location evidence="1">Cytoplasm</location>
    </subcellularLocation>
</comment>
<comment type="domain">
    <text evidence="1">The last Arg residue of the ACP-binding site is essential for the weak association between ACP/AcpP and FabH.</text>
</comment>
<comment type="similarity">
    <text evidence="1">Belongs to the thiolase-like superfamily. FabH family.</text>
</comment>
<name>FABH_ECOHS</name>
<sequence length="317" mass="33546">MYTKIIGTGSYLPEQVRTNADLEKMVDTSDEWIVTRTGIRERHIAAQNETVSTMGFEAATRAIEMAGIEKDQIGLIVVATTSATHAFPSAACQIQSMLGIKGCPAFDVAAACAGFTYALSVADQYVKSGAVKYALVVGSDVLARTCDPTDRGTIIIFGDGAGAAVLAASEEPGIISTHLHADGSYGELLTLPNADRVNPENSIHLTMAGNEVFKVAVTELAHIVDETLAANNLDRSQLDWLVPHQANLRIISATAKKLGMSMDNVVVTLDRHGNTSAASVPCALDEAVRDGRIKPGQLVLLEAFGGGFTWGSALVRF</sequence>
<organism>
    <name type="scientific">Escherichia coli O9:H4 (strain HS)</name>
    <dbReference type="NCBI Taxonomy" id="331112"/>
    <lineage>
        <taxon>Bacteria</taxon>
        <taxon>Pseudomonadati</taxon>
        <taxon>Pseudomonadota</taxon>
        <taxon>Gammaproteobacteria</taxon>
        <taxon>Enterobacterales</taxon>
        <taxon>Enterobacteriaceae</taxon>
        <taxon>Escherichia</taxon>
    </lineage>
</organism>
<accession>A7ZZ48</accession>
<gene>
    <name evidence="1" type="primary">fabH</name>
    <name type="ordered locus">EcHS_A1213</name>
</gene>
<proteinExistence type="inferred from homology"/>
<keyword id="KW-0012">Acyltransferase</keyword>
<keyword id="KW-0963">Cytoplasm</keyword>
<keyword id="KW-0275">Fatty acid biosynthesis</keyword>
<keyword id="KW-0276">Fatty acid metabolism</keyword>
<keyword id="KW-0444">Lipid biosynthesis</keyword>
<keyword id="KW-0443">Lipid metabolism</keyword>
<keyword id="KW-0511">Multifunctional enzyme</keyword>
<keyword id="KW-0808">Transferase</keyword>